<feature type="chain" id="PRO_1000140466" description="C4-dicarboxylate transport protein">
    <location>
        <begin position="1"/>
        <end position="428"/>
    </location>
</feature>
<feature type="transmembrane region" description="Helical" evidence="1">
    <location>
        <begin position="4"/>
        <end position="24"/>
    </location>
</feature>
<feature type="transmembrane region" description="Helical" evidence="1">
    <location>
        <begin position="44"/>
        <end position="64"/>
    </location>
</feature>
<feature type="transmembrane region" description="Helical" evidence="1">
    <location>
        <begin position="76"/>
        <end position="96"/>
    </location>
</feature>
<feature type="transmembrane region" description="Helical" evidence="1">
    <location>
        <begin position="142"/>
        <end position="162"/>
    </location>
</feature>
<feature type="transmembrane region" description="Helical" evidence="1">
    <location>
        <begin position="184"/>
        <end position="204"/>
    </location>
</feature>
<feature type="transmembrane region" description="Helical" evidence="1">
    <location>
        <begin position="222"/>
        <end position="242"/>
    </location>
</feature>
<feature type="transmembrane region" description="Helical" evidence="1">
    <location>
        <begin position="289"/>
        <end position="309"/>
    </location>
</feature>
<feature type="transmembrane region" description="Helical" evidence="1">
    <location>
        <begin position="326"/>
        <end position="346"/>
    </location>
</feature>
<feature type="transmembrane region" description="Helical" evidence="1">
    <location>
        <begin position="352"/>
        <end position="372"/>
    </location>
</feature>
<reference key="1">
    <citation type="journal article" date="2008" name="Genome Res.">
        <title>Comparative genome analysis of Salmonella enteritidis PT4 and Salmonella gallinarum 287/91 provides insights into evolutionary and host adaptation pathways.</title>
        <authorList>
            <person name="Thomson N.R."/>
            <person name="Clayton D.J."/>
            <person name="Windhorst D."/>
            <person name="Vernikos G."/>
            <person name="Davidson S."/>
            <person name="Churcher C."/>
            <person name="Quail M.A."/>
            <person name="Stevens M."/>
            <person name="Jones M.A."/>
            <person name="Watson M."/>
            <person name="Barron A."/>
            <person name="Layton A."/>
            <person name="Pickard D."/>
            <person name="Kingsley R.A."/>
            <person name="Bignell A."/>
            <person name="Clark L."/>
            <person name="Harris B."/>
            <person name="Ormond D."/>
            <person name="Abdellah Z."/>
            <person name="Brooks K."/>
            <person name="Cherevach I."/>
            <person name="Chillingworth T."/>
            <person name="Woodward J."/>
            <person name="Norberczak H."/>
            <person name="Lord A."/>
            <person name="Arrowsmith C."/>
            <person name="Jagels K."/>
            <person name="Moule S."/>
            <person name="Mungall K."/>
            <person name="Saunders M."/>
            <person name="Whitehead S."/>
            <person name="Chabalgoity J.A."/>
            <person name="Maskell D."/>
            <person name="Humphreys T."/>
            <person name="Roberts M."/>
            <person name="Barrow P.A."/>
            <person name="Dougan G."/>
            <person name="Parkhill J."/>
        </authorList>
    </citation>
    <scope>NUCLEOTIDE SEQUENCE [LARGE SCALE GENOMIC DNA]</scope>
    <source>
        <strain>287/91 / NCTC 13346</strain>
    </source>
</reference>
<proteinExistence type="inferred from homology"/>
<comment type="function">
    <text evidence="1">Responsible for the transport of dicarboxylates such as succinate, fumarate, and malate from the periplasm across the membrane.</text>
</comment>
<comment type="subcellular location">
    <subcellularLocation>
        <location evidence="1">Cell inner membrane</location>
        <topology evidence="1">Multi-pass membrane protein</topology>
    </subcellularLocation>
</comment>
<comment type="similarity">
    <text evidence="1">Belongs to the dicarboxylate/amino acid:cation symporter (DAACS) (TC 2.A.23) family.</text>
</comment>
<accession>B5RGR2</accession>
<gene>
    <name evidence="1" type="primary">dctA</name>
    <name type="ordered locus">SG3822</name>
</gene>
<organism>
    <name type="scientific">Salmonella gallinarum (strain 287/91 / NCTC 13346)</name>
    <dbReference type="NCBI Taxonomy" id="550538"/>
    <lineage>
        <taxon>Bacteria</taxon>
        <taxon>Pseudomonadati</taxon>
        <taxon>Pseudomonadota</taxon>
        <taxon>Gammaproteobacteria</taxon>
        <taxon>Enterobacterales</taxon>
        <taxon>Enterobacteriaceae</taxon>
        <taxon>Salmonella</taxon>
    </lineage>
</organism>
<dbReference type="EMBL" id="AM933173">
    <property type="protein sequence ID" value="CAR39599.1"/>
    <property type="molecule type" value="Genomic_DNA"/>
</dbReference>
<dbReference type="RefSeq" id="WP_000858227.1">
    <property type="nucleotide sequence ID" value="NC_011274.1"/>
</dbReference>
<dbReference type="SMR" id="B5RGR2"/>
<dbReference type="KEGG" id="seg:SG3822"/>
<dbReference type="HOGENOM" id="CLU_019375_7_0_6"/>
<dbReference type="Proteomes" id="UP000008321">
    <property type="component" value="Chromosome"/>
</dbReference>
<dbReference type="GO" id="GO:0005886">
    <property type="term" value="C:plasma membrane"/>
    <property type="evidence" value="ECO:0007669"/>
    <property type="project" value="UniProtKB-SubCell"/>
</dbReference>
<dbReference type="GO" id="GO:0015138">
    <property type="term" value="F:fumarate transmembrane transporter activity"/>
    <property type="evidence" value="ECO:0007669"/>
    <property type="project" value="TreeGrafter"/>
</dbReference>
<dbReference type="GO" id="GO:0015366">
    <property type="term" value="F:malate:proton symporter activity"/>
    <property type="evidence" value="ECO:0007669"/>
    <property type="project" value="TreeGrafter"/>
</dbReference>
<dbReference type="GO" id="GO:0015141">
    <property type="term" value="F:succinate transmembrane transporter activity"/>
    <property type="evidence" value="ECO:0007669"/>
    <property type="project" value="TreeGrafter"/>
</dbReference>
<dbReference type="GO" id="GO:0070778">
    <property type="term" value="P:L-aspartate transmembrane transport"/>
    <property type="evidence" value="ECO:0007669"/>
    <property type="project" value="TreeGrafter"/>
</dbReference>
<dbReference type="FunFam" id="1.10.3860.10:FF:000001">
    <property type="entry name" value="C4-dicarboxylate transport protein"/>
    <property type="match status" value="1"/>
</dbReference>
<dbReference type="Gene3D" id="1.10.3860.10">
    <property type="entry name" value="Sodium:dicarboxylate symporter"/>
    <property type="match status" value="1"/>
</dbReference>
<dbReference type="HAMAP" id="MF_01300">
    <property type="entry name" value="C4_dicarb_transport"/>
    <property type="match status" value="1"/>
</dbReference>
<dbReference type="InterPro" id="IPR023954">
    <property type="entry name" value="C4_dicarb_transport"/>
</dbReference>
<dbReference type="InterPro" id="IPR001991">
    <property type="entry name" value="Na-dicarboxylate_symporter"/>
</dbReference>
<dbReference type="InterPro" id="IPR018107">
    <property type="entry name" value="Na-dicarboxylate_symporter_CS"/>
</dbReference>
<dbReference type="InterPro" id="IPR036458">
    <property type="entry name" value="Na:dicarbo_symporter_sf"/>
</dbReference>
<dbReference type="NCBIfam" id="NF002461">
    <property type="entry name" value="PRK01663.1"/>
    <property type="match status" value="1"/>
</dbReference>
<dbReference type="NCBIfam" id="NF009587">
    <property type="entry name" value="PRK13027.1"/>
    <property type="match status" value="1"/>
</dbReference>
<dbReference type="PANTHER" id="PTHR42865:SF1">
    <property type="entry name" value="AEROBIC C4-DICARBOXYLATE TRANSPORT PROTEIN"/>
    <property type="match status" value="1"/>
</dbReference>
<dbReference type="PANTHER" id="PTHR42865">
    <property type="entry name" value="PROTON/GLUTAMATE-ASPARTATE SYMPORTER"/>
    <property type="match status" value="1"/>
</dbReference>
<dbReference type="Pfam" id="PF00375">
    <property type="entry name" value="SDF"/>
    <property type="match status" value="1"/>
</dbReference>
<dbReference type="PRINTS" id="PR00173">
    <property type="entry name" value="EDTRNSPORT"/>
</dbReference>
<dbReference type="SUPFAM" id="SSF118215">
    <property type="entry name" value="Proton glutamate symport protein"/>
    <property type="match status" value="1"/>
</dbReference>
<dbReference type="PROSITE" id="PS00713">
    <property type="entry name" value="NA_DICARBOXYL_SYMP_1"/>
    <property type="match status" value="1"/>
</dbReference>
<dbReference type="PROSITE" id="PS00714">
    <property type="entry name" value="NA_DICARBOXYL_SYMP_2"/>
    <property type="match status" value="1"/>
</dbReference>
<evidence type="ECO:0000255" key="1">
    <source>
        <dbReference type="HAMAP-Rule" id="MF_01300"/>
    </source>
</evidence>
<sequence>MKTSLFKSLYFQVLTAIAIGILLGHYYPELGAQMKPLGDAFVKLIKMIIAPVIFCTVVTGIAGMESMKAVGRTGAVALLYFEIVSTIALIIGLIIVNVVQPGAGMNVDPATLDAQAVAVYAAQAKEQGIIAFLMDVIPGSVIGAFASGNILQVLLFAVLFGFALHRLGSKGQLIFNVIESFSQVIFGIINMIMRLAPIGAFGAMAFTIGKYGVGSLVQLGQLIICFYITCILFVVVVLGTIARVTGFSIFKFIRYIREELLIVLGTSSSESALPRMLDKMEKLGCRKSVVGLVIPTGYSFNLDGTSIYLTMAAVFIAQATNSHMDIFHQITLLVVLLLSSKGAAGVTGSGFIVLAATISAVGHLPVAGLALILGIDRFMSEARALTNLVGNGVATVVVAKWVKELDHQKLDDVLNNRAPDGKTHEISF</sequence>
<name>DCTA_SALG2</name>
<protein>
    <recommendedName>
        <fullName evidence="1">C4-dicarboxylate transport protein</fullName>
    </recommendedName>
</protein>
<keyword id="KW-0997">Cell inner membrane</keyword>
<keyword id="KW-1003">Cell membrane</keyword>
<keyword id="KW-0472">Membrane</keyword>
<keyword id="KW-0769">Symport</keyword>
<keyword id="KW-0812">Transmembrane</keyword>
<keyword id="KW-1133">Transmembrane helix</keyword>
<keyword id="KW-0813">Transport</keyword>